<dbReference type="EMBL" id="AP009240">
    <property type="protein sequence ID" value="BAG79547.1"/>
    <property type="molecule type" value="Genomic_DNA"/>
</dbReference>
<dbReference type="RefSeq" id="WP_000896498.1">
    <property type="nucleotide sequence ID" value="NC_011415.1"/>
</dbReference>
<dbReference type="SMR" id="B6I3X0"/>
<dbReference type="GeneID" id="93778234"/>
<dbReference type="KEGG" id="ecy:ECSE_4023"/>
<dbReference type="HOGENOM" id="CLU_050669_0_1_6"/>
<dbReference type="Proteomes" id="UP000008199">
    <property type="component" value="Chromosome"/>
</dbReference>
<dbReference type="GO" id="GO:0005886">
    <property type="term" value="C:plasma membrane"/>
    <property type="evidence" value="ECO:0007669"/>
    <property type="project" value="UniProtKB-SubCell"/>
</dbReference>
<dbReference type="GO" id="GO:0045259">
    <property type="term" value="C:proton-transporting ATP synthase complex"/>
    <property type="evidence" value="ECO:0007669"/>
    <property type="project" value="UniProtKB-KW"/>
</dbReference>
<dbReference type="GO" id="GO:0005524">
    <property type="term" value="F:ATP binding"/>
    <property type="evidence" value="ECO:0007669"/>
    <property type="project" value="UniProtKB-UniRule"/>
</dbReference>
<dbReference type="GO" id="GO:0046933">
    <property type="term" value="F:proton-transporting ATP synthase activity, rotational mechanism"/>
    <property type="evidence" value="ECO:0007669"/>
    <property type="project" value="UniProtKB-UniRule"/>
</dbReference>
<dbReference type="GO" id="GO:0042777">
    <property type="term" value="P:proton motive force-driven plasma membrane ATP synthesis"/>
    <property type="evidence" value="ECO:0007669"/>
    <property type="project" value="UniProtKB-UniRule"/>
</dbReference>
<dbReference type="CDD" id="cd12151">
    <property type="entry name" value="F1-ATPase_gamma"/>
    <property type="match status" value="1"/>
</dbReference>
<dbReference type="FunFam" id="1.10.287.80:FF:000005">
    <property type="entry name" value="ATP synthase gamma chain"/>
    <property type="match status" value="2"/>
</dbReference>
<dbReference type="FunFam" id="3.40.1380.10:FF:000001">
    <property type="entry name" value="ATP synthase gamma chain"/>
    <property type="match status" value="1"/>
</dbReference>
<dbReference type="Gene3D" id="3.40.1380.10">
    <property type="match status" value="1"/>
</dbReference>
<dbReference type="Gene3D" id="1.10.287.80">
    <property type="entry name" value="ATP synthase, gamma subunit, helix hairpin domain"/>
    <property type="match status" value="1"/>
</dbReference>
<dbReference type="HAMAP" id="MF_00815">
    <property type="entry name" value="ATP_synth_gamma_bact"/>
    <property type="match status" value="1"/>
</dbReference>
<dbReference type="InterPro" id="IPR035968">
    <property type="entry name" value="ATP_synth_F1_ATPase_gsu"/>
</dbReference>
<dbReference type="InterPro" id="IPR000131">
    <property type="entry name" value="ATP_synth_F1_gsu"/>
</dbReference>
<dbReference type="InterPro" id="IPR023632">
    <property type="entry name" value="ATP_synth_F1_gsu_CS"/>
</dbReference>
<dbReference type="NCBIfam" id="TIGR01146">
    <property type="entry name" value="ATPsyn_F1gamma"/>
    <property type="match status" value="1"/>
</dbReference>
<dbReference type="NCBIfam" id="NF004144">
    <property type="entry name" value="PRK05621.1-1"/>
    <property type="match status" value="1"/>
</dbReference>
<dbReference type="PANTHER" id="PTHR11693">
    <property type="entry name" value="ATP SYNTHASE GAMMA CHAIN"/>
    <property type="match status" value="1"/>
</dbReference>
<dbReference type="PANTHER" id="PTHR11693:SF22">
    <property type="entry name" value="ATP SYNTHASE SUBUNIT GAMMA, MITOCHONDRIAL"/>
    <property type="match status" value="1"/>
</dbReference>
<dbReference type="Pfam" id="PF00231">
    <property type="entry name" value="ATP-synt"/>
    <property type="match status" value="1"/>
</dbReference>
<dbReference type="PRINTS" id="PR00126">
    <property type="entry name" value="ATPASEGAMMA"/>
</dbReference>
<dbReference type="SUPFAM" id="SSF52943">
    <property type="entry name" value="ATP synthase (F1-ATPase), gamma subunit"/>
    <property type="match status" value="1"/>
</dbReference>
<dbReference type="PROSITE" id="PS00153">
    <property type="entry name" value="ATPASE_GAMMA"/>
    <property type="match status" value="1"/>
</dbReference>
<reference key="1">
    <citation type="journal article" date="2008" name="DNA Res.">
        <title>Complete genome sequence and comparative analysis of the wild-type commensal Escherichia coli strain SE11 isolated from a healthy adult.</title>
        <authorList>
            <person name="Oshima K."/>
            <person name="Toh H."/>
            <person name="Ogura Y."/>
            <person name="Sasamoto H."/>
            <person name="Morita H."/>
            <person name="Park S.-H."/>
            <person name="Ooka T."/>
            <person name="Iyoda S."/>
            <person name="Taylor T.D."/>
            <person name="Hayashi T."/>
            <person name="Itoh K."/>
            <person name="Hattori M."/>
        </authorList>
    </citation>
    <scope>NUCLEOTIDE SEQUENCE [LARGE SCALE GENOMIC DNA]</scope>
    <source>
        <strain>SE11</strain>
    </source>
</reference>
<organism>
    <name type="scientific">Escherichia coli (strain SE11)</name>
    <dbReference type="NCBI Taxonomy" id="409438"/>
    <lineage>
        <taxon>Bacteria</taxon>
        <taxon>Pseudomonadati</taxon>
        <taxon>Pseudomonadota</taxon>
        <taxon>Gammaproteobacteria</taxon>
        <taxon>Enterobacterales</taxon>
        <taxon>Enterobacteriaceae</taxon>
        <taxon>Escherichia</taxon>
    </lineage>
</organism>
<gene>
    <name evidence="1" type="primary">atpG</name>
    <name type="ordered locus">ECSE_4023</name>
</gene>
<protein>
    <recommendedName>
        <fullName evidence="1">ATP synthase gamma chain</fullName>
    </recommendedName>
    <alternativeName>
        <fullName evidence="1">ATP synthase F1 sector gamma subunit</fullName>
    </alternativeName>
    <alternativeName>
        <fullName evidence="1">F-ATPase gamma subunit</fullName>
    </alternativeName>
</protein>
<comment type="function">
    <text evidence="1">Produces ATP from ADP in the presence of a proton gradient across the membrane. The gamma chain is believed to be important in regulating ATPase activity and the flow of protons through the CF(0) complex.</text>
</comment>
<comment type="subunit">
    <text evidence="1">F-type ATPases have 2 components, CF(1) - the catalytic core - and CF(0) - the membrane proton channel. CF(1) has five subunits: alpha(3), beta(3), gamma(1), delta(1), epsilon(1). CF(0) has three main subunits: a, b and c.</text>
</comment>
<comment type="subcellular location">
    <subcellularLocation>
        <location evidence="1">Cell inner membrane</location>
        <topology evidence="1">Peripheral membrane protein</topology>
    </subcellularLocation>
</comment>
<comment type="similarity">
    <text evidence="1">Belongs to the ATPase gamma chain family.</text>
</comment>
<evidence type="ECO:0000255" key="1">
    <source>
        <dbReference type="HAMAP-Rule" id="MF_00815"/>
    </source>
</evidence>
<proteinExistence type="inferred from homology"/>
<name>ATPG_ECOSE</name>
<feature type="chain" id="PRO_1000134148" description="ATP synthase gamma chain">
    <location>
        <begin position="1"/>
        <end position="287"/>
    </location>
</feature>
<accession>B6I3X0</accession>
<keyword id="KW-0066">ATP synthesis</keyword>
<keyword id="KW-0997">Cell inner membrane</keyword>
<keyword id="KW-1003">Cell membrane</keyword>
<keyword id="KW-0139">CF(1)</keyword>
<keyword id="KW-0375">Hydrogen ion transport</keyword>
<keyword id="KW-0406">Ion transport</keyword>
<keyword id="KW-0472">Membrane</keyword>
<keyword id="KW-0813">Transport</keyword>
<sequence>MAGAKEIRSKIASVQNTQKITKAMEMVAASKMRKSQDRMAASRPYAETMRKVIGHLAHGNLEYKHPYLEDRDVKRVGYLVVSTDRGLCGGLNINLFKKLLAEMKTWTDKGVQCDLAMIGSKGVSFFNSVGGNVVAQVTGMGDNPSLSELIGPVKVMLQAYDEGRLDKLYIVSNKFINTMSQVPTISQLLPLPASDDDDLKHKSWDYLYEPDPKALLDTLLRRYVESQVYQGVVENLASEQAARMVAMKAATDNGGSLIKELQLVYNKARQASITQELTEIVSGAAAV</sequence>